<accession>P0CV15</accession>
<sequence>MRSSTVLYVLGAAILAVNGVTTALISDGVDKGSQEQTRWLRSNAMEHETDDEERVLEFKLPSSISTWRAERFERLESLEKQKEMERQAVLELVDKYAPLLLTDRMFAGFTKLDQEGIPLPSMIALLREHGKDITSEMEAYLINSYKTTHKIPLELNTAR</sequence>
<gene>
    <name evidence="3" type="primary">RXLR50</name>
</gene>
<comment type="function">
    <text evidence="2">Secreted effector that completely suppresses the host cell death induced by cell death-inducing proteins.</text>
</comment>
<comment type="subcellular location">
    <subcellularLocation>
        <location evidence="2">Secreted</location>
    </subcellularLocation>
    <subcellularLocation>
        <location evidence="2">Host nucleus</location>
    </subcellularLocation>
    <subcellularLocation>
        <location evidence="2">Host cytoplasm</location>
    </subcellularLocation>
</comment>
<comment type="domain">
    <text evidence="5">The RxLR-dEER motif acts to carry the protein into the host cell cytoplasm through binding to cell surface phosphatidylinositol-3-phosphate.</text>
</comment>
<comment type="similarity">
    <text evidence="4">Belongs to the RxLR effector family.</text>
</comment>
<dbReference type="SMR" id="P0CV15"/>
<dbReference type="GO" id="GO:0005576">
    <property type="term" value="C:extracellular region"/>
    <property type="evidence" value="ECO:0007669"/>
    <property type="project" value="UniProtKB-SubCell"/>
</dbReference>
<dbReference type="GO" id="GO:0030430">
    <property type="term" value="C:host cell cytoplasm"/>
    <property type="evidence" value="ECO:0007669"/>
    <property type="project" value="UniProtKB-SubCell"/>
</dbReference>
<dbReference type="GO" id="GO:0042025">
    <property type="term" value="C:host cell nucleus"/>
    <property type="evidence" value="ECO:0007669"/>
    <property type="project" value="UniProtKB-SubCell"/>
</dbReference>
<reference key="1">
    <citation type="journal article" date="2018" name="Front. Plant Sci.">
        <title>In planta functional analysis and subcellular localization of the oomycete pathogen Plasmopara viticola candidate RXLR effector repertoire.</title>
        <authorList>
            <person name="Liu Y."/>
            <person name="Lan X."/>
            <person name="Song S."/>
            <person name="Yin L."/>
            <person name="Dry I.B."/>
            <person name="Qu J."/>
            <person name="Xiang J."/>
            <person name="Lu J."/>
        </authorList>
    </citation>
    <scope>NUCLEOTIDE SEQUENCE [MRNA]</scope>
    <scope>DOMAIN</scope>
    <scope>FUNCTION</scope>
    <scope>SUBCELLULAR LOCATION</scope>
</reference>
<protein>
    <recommendedName>
        <fullName evidence="3">Secreted RxLR effector protein 50</fullName>
    </recommendedName>
</protein>
<name>RLR50_PLAVT</name>
<feature type="signal peptide" evidence="1">
    <location>
        <begin position="1"/>
        <end position="19"/>
    </location>
</feature>
<feature type="chain" id="PRO_0000447924" description="Secreted RxLR effector protein 50">
    <location>
        <begin position="20"/>
        <end position="159"/>
    </location>
</feature>
<feature type="short sequence motif" description="RxLR-dEER" evidence="5">
    <location>
        <begin position="38"/>
        <end position="54"/>
    </location>
</feature>
<evidence type="ECO:0000255" key="1"/>
<evidence type="ECO:0000269" key="2">
    <source>
    </source>
</evidence>
<evidence type="ECO:0000303" key="3">
    <source>
    </source>
</evidence>
<evidence type="ECO:0000305" key="4"/>
<evidence type="ECO:0000305" key="5">
    <source>
    </source>
</evidence>
<keyword id="KW-1035">Host cytoplasm</keyword>
<keyword id="KW-1048">Host nucleus</keyword>
<keyword id="KW-0964">Secreted</keyword>
<keyword id="KW-0732">Signal</keyword>
<keyword id="KW-0843">Virulence</keyword>
<proteinExistence type="evidence at transcript level"/>
<organism>
    <name type="scientific">Plasmopara viticola</name>
    <name type="common">Downy mildew of grapevine</name>
    <name type="synonym">Botrytis viticola</name>
    <dbReference type="NCBI Taxonomy" id="143451"/>
    <lineage>
        <taxon>Eukaryota</taxon>
        <taxon>Sar</taxon>
        <taxon>Stramenopiles</taxon>
        <taxon>Oomycota</taxon>
        <taxon>Peronosporales</taxon>
        <taxon>Peronosporaceae</taxon>
        <taxon>Plasmopara</taxon>
    </lineage>
</organism>